<comment type="function">
    <text evidence="1">Involved in the modulation of the specificity of the ClpAP-mediated ATP-dependent protein degradation.</text>
</comment>
<comment type="subunit">
    <text evidence="1">Binds to the N-terminal domain of the chaperone ClpA.</text>
</comment>
<comment type="similarity">
    <text evidence="1">Belongs to the ClpS family.</text>
</comment>
<evidence type="ECO:0000255" key="1">
    <source>
        <dbReference type="HAMAP-Rule" id="MF_00302"/>
    </source>
</evidence>
<keyword id="KW-1185">Reference proteome</keyword>
<protein>
    <recommendedName>
        <fullName evidence="1">ATP-dependent Clp protease adapter protein ClpS</fullName>
    </recommendedName>
</protein>
<sequence>MTQSSYNPIEQEGSPELLLQEKIRRPKMYQVLLHNDNYTTMEFVVSILMKIFRKTMEQATSIMLSVHRKGIGVAGVYTRELAETKVNTTHMLAREAGFPLRCTLQEVDE</sequence>
<feature type="chain" id="PRO_1000115460" description="ATP-dependent Clp protease adapter protein ClpS">
    <location>
        <begin position="1"/>
        <end position="109"/>
    </location>
</feature>
<organism>
    <name type="scientific">Lawsonia intracellularis (strain PHE/MN1-00)</name>
    <dbReference type="NCBI Taxonomy" id="363253"/>
    <lineage>
        <taxon>Bacteria</taxon>
        <taxon>Pseudomonadati</taxon>
        <taxon>Thermodesulfobacteriota</taxon>
        <taxon>Desulfovibrionia</taxon>
        <taxon>Desulfovibrionales</taxon>
        <taxon>Desulfovibrionaceae</taxon>
        <taxon>Lawsonia</taxon>
    </lineage>
</organism>
<gene>
    <name evidence="1" type="primary">clpS</name>
    <name type="ordered locus">LI0617</name>
</gene>
<proteinExistence type="inferred from homology"/>
<name>CLPS_LAWIP</name>
<dbReference type="EMBL" id="AM180252">
    <property type="protein sequence ID" value="CAJ54671.1"/>
    <property type="molecule type" value="Genomic_DNA"/>
</dbReference>
<dbReference type="RefSeq" id="WP_011526700.1">
    <property type="nucleotide sequence ID" value="NC_008011.1"/>
</dbReference>
<dbReference type="SMR" id="Q1MQQ6"/>
<dbReference type="STRING" id="363253.LI0617"/>
<dbReference type="KEGG" id="lip:LI0617"/>
<dbReference type="eggNOG" id="COG2127">
    <property type="taxonomic scope" value="Bacteria"/>
</dbReference>
<dbReference type="HOGENOM" id="CLU_134358_1_0_7"/>
<dbReference type="OrthoDB" id="9796121at2"/>
<dbReference type="Proteomes" id="UP000002430">
    <property type="component" value="Chromosome"/>
</dbReference>
<dbReference type="GO" id="GO:0030163">
    <property type="term" value="P:protein catabolic process"/>
    <property type="evidence" value="ECO:0007669"/>
    <property type="project" value="InterPro"/>
</dbReference>
<dbReference type="GO" id="GO:0006508">
    <property type="term" value="P:proteolysis"/>
    <property type="evidence" value="ECO:0007669"/>
    <property type="project" value="UniProtKB-UniRule"/>
</dbReference>
<dbReference type="FunFam" id="3.30.1390.10:FF:000002">
    <property type="entry name" value="ATP-dependent Clp protease adapter protein ClpS"/>
    <property type="match status" value="1"/>
</dbReference>
<dbReference type="Gene3D" id="3.30.1390.10">
    <property type="match status" value="1"/>
</dbReference>
<dbReference type="HAMAP" id="MF_00302">
    <property type="entry name" value="ClpS"/>
    <property type="match status" value="1"/>
</dbReference>
<dbReference type="InterPro" id="IPR022935">
    <property type="entry name" value="ClpS"/>
</dbReference>
<dbReference type="InterPro" id="IPR003769">
    <property type="entry name" value="ClpS_core"/>
</dbReference>
<dbReference type="InterPro" id="IPR014719">
    <property type="entry name" value="Ribosomal_bL12_C/ClpS-like"/>
</dbReference>
<dbReference type="PANTHER" id="PTHR33473:SF19">
    <property type="entry name" value="ATP-DEPENDENT CLP PROTEASE ADAPTER PROTEIN CLPS"/>
    <property type="match status" value="1"/>
</dbReference>
<dbReference type="PANTHER" id="PTHR33473">
    <property type="entry name" value="ATP-DEPENDENT CLP PROTEASE ADAPTER PROTEIN CLPS1, CHLOROPLASTIC"/>
    <property type="match status" value="1"/>
</dbReference>
<dbReference type="Pfam" id="PF02617">
    <property type="entry name" value="ClpS"/>
    <property type="match status" value="1"/>
</dbReference>
<dbReference type="SUPFAM" id="SSF54736">
    <property type="entry name" value="ClpS-like"/>
    <property type="match status" value="1"/>
</dbReference>
<reference key="1">
    <citation type="submission" date="2005-11" db="EMBL/GenBank/DDBJ databases">
        <title>The complete genome sequence of Lawsonia intracellularis: the causative agent of proliferative enteropathy.</title>
        <authorList>
            <person name="Kaur K."/>
            <person name="Zhang Q."/>
            <person name="Beckler D."/>
            <person name="Munir S."/>
            <person name="Li L."/>
            <person name="Kinsley K."/>
            <person name="Herron L."/>
            <person name="Peterson A."/>
            <person name="May B."/>
            <person name="Singh S."/>
            <person name="Gebhart C."/>
            <person name="Kapur V."/>
        </authorList>
    </citation>
    <scope>NUCLEOTIDE SEQUENCE [LARGE SCALE GENOMIC DNA]</scope>
    <source>
        <strain>PHE/MN1-00</strain>
    </source>
</reference>
<accession>Q1MQQ6</accession>